<sequence length="122" mass="13231">MIQMQSILEVADNSGAKKVMCIKVLGGSHHMVAKLGDVIVVSIKEAIPGGKVKKGDVYKGVIVRTKTGVVRADGSTIKFDKNALVLLNKQDEPIGTRVFGPVTRELRAKKYVRIMSLAEEVL</sequence>
<dbReference type="EMBL" id="CP000087">
    <property type="protein sequence ID" value="ABE05133.1"/>
    <property type="molecule type" value="Genomic_DNA"/>
</dbReference>
<dbReference type="RefSeq" id="WP_011477711.1">
    <property type="nucleotide sequence ID" value="NC_007940.1"/>
</dbReference>
<dbReference type="SMR" id="Q1RHN1"/>
<dbReference type="KEGG" id="rbe:RBE_1052"/>
<dbReference type="eggNOG" id="COG0093">
    <property type="taxonomic scope" value="Bacteria"/>
</dbReference>
<dbReference type="HOGENOM" id="CLU_095071_2_1_5"/>
<dbReference type="OrthoDB" id="9806379at2"/>
<dbReference type="Proteomes" id="UP000001951">
    <property type="component" value="Chromosome"/>
</dbReference>
<dbReference type="GO" id="GO:0022625">
    <property type="term" value="C:cytosolic large ribosomal subunit"/>
    <property type="evidence" value="ECO:0007669"/>
    <property type="project" value="TreeGrafter"/>
</dbReference>
<dbReference type="GO" id="GO:0070180">
    <property type="term" value="F:large ribosomal subunit rRNA binding"/>
    <property type="evidence" value="ECO:0007669"/>
    <property type="project" value="TreeGrafter"/>
</dbReference>
<dbReference type="GO" id="GO:0003735">
    <property type="term" value="F:structural constituent of ribosome"/>
    <property type="evidence" value="ECO:0007669"/>
    <property type="project" value="InterPro"/>
</dbReference>
<dbReference type="GO" id="GO:0006412">
    <property type="term" value="P:translation"/>
    <property type="evidence" value="ECO:0007669"/>
    <property type="project" value="UniProtKB-UniRule"/>
</dbReference>
<dbReference type="CDD" id="cd00337">
    <property type="entry name" value="Ribosomal_uL14"/>
    <property type="match status" value="1"/>
</dbReference>
<dbReference type="FunFam" id="2.40.150.20:FF:000001">
    <property type="entry name" value="50S ribosomal protein L14"/>
    <property type="match status" value="1"/>
</dbReference>
<dbReference type="Gene3D" id="2.40.150.20">
    <property type="entry name" value="Ribosomal protein L14"/>
    <property type="match status" value="1"/>
</dbReference>
<dbReference type="HAMAP" id="MF_01367">
    <property type="entry name" value="Ribosomal_uL14"/>
    <property type="match status" value="1"/>
</dbReference>
<dbReference type="InterPro" id="IPR000218">
    <property type="entry name" value="Ribosomal_uL14"/>
</dbReference>
<dbReference type="InterPro" id="IPR005745">
    <property type="entry name" value="Ribosomal_uL14_bac-type"/>
</dbReference>
<dbReference type="InterPro" id="IPR019972">
    <property type="entry name" value="Ribosomal_uL14_CS"/>
</dbReference>
<dbReference type="InterPro" id="IPR036853">
    <property type="entry name" value="Ribosomal_uL14_sf"/>
</dbReference>
<dbReference type="NCBIfam" id="TIGR01067">
    <property type="entry name" value="rplN_bact"/>
    <property type="match status" value="1"/>
</dbReference>
<dbReference type="PANTHER" id="PTHR11761">
    <property type="entry name" value="50S/60S RIBOSOMAL PROTEIN L14/L23"/>
    <property type="match status" value="1"/>
</dbReference>
<dbReference type="PANTHER" id="PTHR11761:SF3">
    <property type="entry name" value="LARGE RIBOSOMAL SUBUNIT PROTEIN UL14M"/>
    <property type="match status" value="1"/>
</dbReference>
<dbReference type="Pfam" id="PF00238">
    <property type="entry name" value="Ribosomal_L14"/>
    <property type="match status" value="1"/>
</dbReference>
<dbReference type="SMART" id="SM01374">
    <property type="entry name" value="Ribosomal_L14"/>
    <property type="match status" value="1"/>
</dbReference>
<dbReference type="SUPFAM" id="SSF50193">
    <property type="entry name" value="Ribosomal protein L14"/>
    <property type="match status" value="1"/>
</dbReference>
<dbReference type="PROSITE" id="PS00049">
    <property type="entry name" value="RIBOSOMAL_L14"/>
    <property type="match status" value="1"/>
</dbReference>
<gene>
    <name evidence="1" type="primary">rplN</name>
    <name type="ordered locus">RBE_1052</name>
</gene>
<protein>
    <recommendedName>
        <fullName evidence="1">Large ribosomal subunit protein uL14</fullName>
    </recommendedName>
    <alternativeName>
        <fullName evidence="2">50S ribosomal protein L14</fullName>
    </alternativeName>
</protein>
<comment type="function">
    <text evidence="1">Binds to 23S rRNA. Forms part of two intersubunit bridges in the 70S ribosome.</text>
</comment>
<comment type="subunit">
    <text evidence="1">Part of the 50S ribosomal subunit. Forms a cluster with proteins L3 and L19. In the 70S ribosome, L14 and L19 interact and together make contacts with the 16S rRNA in bridges B5 and B8.</text>
</comment>
<comment type="similarity">
    <text evidence="1">Belongs to the universal ribosomal protein uL14 family.</text>
</comment>
<evidence type="ECO:0000255" key="1">
    <source>
        <dbReference type="HAMAP-Rule" id="MF_01367"/>
    </source>
</evidence>
<evidence type="ECO:0000305" key="2"/>
<proteinExistence type="inferred from homology"/>
<accession>Q1RHN1</accession>
<feature type="chain" id="PRO_0000272386" description="Large ribosomal subunit protein uL14">
    <location>
        <begin position="1"/>
        <end position="122"/>
    </location>
</feature>
<organism>
    <name type="scientific">Rickettsia bellii (strain RML369-C)</name>
    <dbReference type="NCBI Taxonomy" id="336407"/>
    <lineage>
        <taxon>Bacteria</taxon>
        <taxon>Pseudomonadati</taxon>
        <taxon>Pseudomonadota</taxon>
        <taxon>Alphaproteobacteria</taxon>
        <taxon>Rickettsiales</taxon>
        <taxon>Rickettsiaceae</taxon>
        <taxon>Rickettsieae</taxon>
        <taxon>Rickettsia</taxon>
        <taxon>belli group</taxon>
    </lineage>
</organism>
<name>RL14_RICBR</name>
<reference key="1">
    <citation type="journal article" date="2006" name="PLoS Genet.">
        <title>Genome sequence of Rickettsia bellii illuminates the role of amoebae in gene exchanges between intracellular pathogens.</title>
        <authorList>
            <person name="Ogata H."/>
            <person name="La Scola B."/>
            <person name="Audic S."/>
            <person name="Renesto P."/>
            <person name="Blanc G."/>
            <person name="Robert C."/>
            <person name="Fournier P.-E."/>
            <person name="Claverie J.-M."/>
            <person name="Raoult D."/>
        </authorList>
    </citation>
    <scope>NUCLEOTIDE SEQUENCE [LARGE SCALE GENOMIC DNA]</scope>
    <source>
        <strain>RML369-C</strain>
    </source>
</reference>
<keyword id="KW-0687">Ribonucleoprotein</keyword>
<keyword id="KW-0689">Ribosomal protein</keyword>
<keyword id="KW-0694">RNA-binding</keyword>
<keyword id="KW-0699">rRNA-binding</keyword>